<accession>P0C9Y2</accession>
<organism>
    <name type="scientific">African swine fever virus (isolate Tick/Malawi/Lil 20-1/1983)</name>
    <name type="common">ASFV</name>
    <dbReference type="NCBI Taxonomy" id="10500"/>
    <lineage>
        <taxon>Viruses</taxon>
        <taxon>Varidnaviria</taxon>
        <taxon>Bamfordvirae</taxon>
        <taxon>Nucleocytoviricota</taxon>
        <taxon>Pokkesviricetes</taxon>
        <taxon>Asfuvirales</taxon>
        <taxon>Asfarviridae</taxon>
        <taxon>Asfivirus</taxon>
        <taxon>African swine fever virus</taxon>
    </lineage>
</organism>
<keyword id="KW-1015">Disulfide bond</keyword>
<keyword id="KW-0426">Late protein</keyword>
<keyword id="KW-0472">Membrane</keyword>
<keyword id="KW-0812">Transmembrane</keyword>
<keyword id="KW-1133">Transmembrane helix</keyword>
<keyword id="KW-0261">Viral envelope protein</keyword>
<keyword id="KW-0946">Virion</keyword>
<feature type="chain" id="PRO_0000373393" description="Inner membrane protein p12">
    <location>
        <begin position="1"/>
        <end position="62"/>
    </location>
</feature>
<feature type="transmembrane region" description="Helical" evidence="2">
    <location>
        <begin position="16"/>
        <end position="36"/>
    </location>
</feature>
<gene>
    <name type="ordered locus">Mal-106</name>
</gene>
<reference key="1">
    <citation type="submission" date="2003-03" db="EMBL/GenBank/DDBJ databases">
        <title>African swine fever virus genomes.</title>
        <authorList>
            <person name="Kutish G.F."/>
            <person name="Rock D.L."/>
        </authorList>
    </citation>
    <scope>NUCLEOTIDE SEQUENCE [LARGE SCALE GENOMIC DNA]</scope>
</reference>
<sequence>MALDGSSGGGSNVETLLIVAIIVVIMAIMLYYFWWMPRQQQKKCSKAEECTCNNGSCSLKTS</sequence>
<protein>
    <recommendedName>
        <fullName evidence="3">Inner membrane protein p12</fullName>
    </recommendedName>
    <alternativeName>
        <fullName>Protein p12</fullName>
    </alternativeName>
</protein>
<comment type="subunit">
    <text evidence="1">Homomultimer; disulfide-linked.</text>
</comment>
<comment type="subcellular location">
    <subcellularLocation>
        <location evidence="1">Virion membrane</location>
        <topology evidence="3">Single-pass membrane protein</topology>
    </subcellularLocation>
    <text evidence="1">Part of the virion inner membrane.</text>
</comment>
<comment type="induction">
    <text evidence="3">Expressed in the late phase of the viral replicative cycle.</text>
</comment>
<comment type="PTM">
    <text evidence="1">Not glycosylated.</text>
</comment>
<comment type="similarity">
    <text evidence="3">Belongs to the asfivirus inner membrane protein p12 family.</text>
</comment>
<name>P12_ASFM2</name>
<organismHost>
    <name type="scientific">Ornithodoros</name>
    <name type="common">relapsing fever ticks</name>
    <dbReference type="NCBI Taxonomy" id="6937"/>
</organismHost>
<organismHost>
    <name type="scientific">Phacochoerus aethiopicus</name>
    <name type="common">Warthog</name>
    <dbReference type="NCBI Taxonomy" id="85517"/>
</organismHost>
<organismHost>
    <name type="scientific">Phacochoerus africanus</name>
    <name type="common">Warthog</name>
    <dbReference type="NCBI Taxonomy" id="41426"/>
</organismHost>
<organismHost>
    <name type="scientific">Potamochoerus larvatus</name>
    <name type="common">Bushpig</name>
    <dbReference type="NCBI Taxonomy" id="273792"/>
</organismHost>
<organismHost>
    <name type="scientific">Sus scrofa</name>
    <name type="common">Pig</name>
    <dbReference type="NCBI Taxonomy" id="9823"/>
</organismHost>
<evidence type="ECO:0000250" key="1">
    <source>
        <dbReference type="UniProtKB" id="P32510"/>
    </source>
</evidence>
<evidence type="ECO:0000255" key="2"/>
<evidence type="ECO:0000305" key="3"/>
<proteinExistence type="inferred from homology"/>
<dbReference type="EMBL" id="AY261361">
    <property type="status" value="NOT_ANNOTATED_CDS"/>
    <property type="molecule type" value="Genomic_DNA"/>
</dbReference>
<dbReference type="SMR" id="P0C9Y2"/>
<dbReference type="Proteomes" id="UP000000860">
    <property type="component" value="Segment"/>
</dbReference>
<dbReference type="GO" id="GO:0016020">
    <property type="term" value="C:membrane"/>
    <property type="evidence" value="ECO:0007669"/>
    <property type="project" value="UniProtKB-KW"/>
</dbReference>
<dbReference type="GO" id="GO:0019031">
    <property type="term" value="C:viral envelope"/>
    <property type="evidence" value="ECO:0007669"/>
    <property type="project" value="UniProtKB-KW"/>
</dbReference>
<dbReference type="GO" id="GO:0055036">
    <property type="term" value="C:virion membrane"/>
    <property type="evidence" value="ECO:0007669"/>
    <property type="project" value="UniProtKB-SubCell"/>
</dbReference>